<name>LEXA_MARN8</name>
<reference key="1">
    <citation type="journal article" date="2011" name="Appl. Environ. Microbiol.">
        <title>Genomic potential of Marinobacter aquaeolei, a biogeochemical 'opportunitroph'.</title>
        <authorList>
            <person name="Singer E."/>
            <person name="Webb E.A."/>
            <person name="Nelson W.C."/>
            <person name="Heidelberg J.F."/>
            <person name="Ivanova N."/>
            <person name="Pati A."/>
            <person name="Edwards K.J."/>
        </authorList>
    </citation>
    <scope>NUCLEOTIDE SEQUENCE [LARGE SCALE GENOMIC DNA]</scope>
    <source>
        <strain>ATCC 700491 / DSM 11845 / VT8</strain>
    </source>
</reference>
<proteinExistence type="inferred from homology"/>
<keyword id="KW-0068">Autocatalytic cleavage</keyword>
<keyword id="KW-0227">DNA damage</keyword>
<keyword id="KW-0234">DNA repair</keyword>
<keyword id="KW-0235">DNA replication</keyword>
<keyword id="KW-0238">DNA-binding</keyword>
<keyword id="KW-0378">Hydrolase</keyword>
<keyword id="KW-0678">Repressor</keyword>
<keyword id="KW-0742">SOS response</keyword>
<keyword id="KW-0804">Transcription</keyword>
<keyword id="KW-0805">Transcription regulation</keyword>
<sequence>MKLTARQSQVLDIIRRYVDETGYPPTRAEIAAELGFRSANAAEEHLRALARKGAIEMVPGASRGIRLPEAEEDLGLPVIGQVAAGSPILAQEHIEDHCTLQPGFFSPSADYLLRVRGMSMKDIGILDGDLLAVHSTQDVHNGQIVVARVGEEVTVKRFRREGNKVWLIAENEEFAPIEVDLAEQELFIEGLGVGVIRRSDLH</sequence>
<evidence type="ECO:0000255" key="1">
    <source>
        <dbReference type="HAMAP-Rule" id="MF_00015"/>
    </source>
</evidence>
<organism>
    <name type="scientific">Marinobacter nauticus (strain ATCC 700491 / DSM 11845 / VT8)</name>
    <name type="common">Marinobacter aquaeolei</name>
    <dbReference type="NCBI Taxonomy" id="351348"/>
    <lineage>
        <taxon>Bacteria</taxon>
        <taxon>Pseudomonadati</taxon>
        <taxon>Pseudomonadota</taxon>
        <taxon>Gammaproteobacteria</taxon>
        <taxon>Pseudomonadales</taxon>
        <taxon>Marinobacteraceae</taxon>
        <taxon>Marinobacter</taxon>
    </lineage>
</organism>
<dbReference type="EC" id="3.4.21.88" evidence="1"/>
<dbReference type="EMBL" id="CP000514">
    <property type="protein sequence ID" value="ABM19088.1"/>
    <property type="molecule type" value="Genomic_DNA"/>
</dbReference>
<dbReference type="SMR" id="A1U269"/>
<dbReference type="STRING" id="351348.Maqu_2007"/>
<dbReference type="MEROPS" id="S24.001"/>
<dbReference type="KEGG" id="maq:Maqu_2007"/>
<dbReference type="eggNOG" id="COG1974">
    <property type="taxonomic scope" value="Bacteria"/>
</dbReference>
<dbReference type="HOGENOM" id="CLU_066192_45_3_6"/>
<dbReference type="OrthoDB" id="9802364at2"/>
<dbReference type="Proteomes" id="UP000000998">
    <property type="component" value="Chromosome"/>
</dbReference>
<dbReference type="GO" id="GO:0003677">
    <property type="term" value="F:DNA binding"/>
    <property type="evidence" value="ECO:0007669"/>
    <property type="project" value="UniProtKB-UniRule"/>
</dbReference>
<dbReference type="GO" id="GO:0004252">
    <property type="term" value="F:serine-type endopeptidase activity"/>
    <property type="evidence" value="ECO:0007669"/>
    <property type="project" value="UniProtKB-UniRule"/>
</dbReference>
<dbReference type="GO" id="GO:0006281">
    <property type="term" value="P:DNA repair"/>
    <property type="evidence" value="ECO:0007669"/>
    <property type="project" value="UniProtKB-UniRule"/>
</dbReference>
<dbReference type="GO" id="GO:0006260">
    <property type="term" value="P:DNA replication"/>
    <property type="evidence" value="ECO:0007669"/>
    <property type="project" value="UniProtKB-UniRule"/>
</dbReference>
<dbReference type="GO" id="GO:0045892">
    <property type="term" value="P:negative regulation of DNA-templated transcription"/>
    <property type="evidence" value="ECO:0007669"/>
    <property type="project" value="UniProtKB-UniRule"/>
</dbReference>
<dbReference type="GO" id="GO:0006508">
    <property type="term" value="P:proteolysis"/>
    <property type="evidence" value="ECO:0007669"/>
    <property type="project" value="InterPro"/>
</dbReference>
<dbReference type="GO" id="GO:0009432">
    <property type="term" value="P:SOS response"/>
    <property type="evidence" value="ECO:0007669"/>
    <property type="project" value="UniProtKB-UniRule"/>
</dbReference>
<dbReference type="CDD" id="cd06529">
    <property type="entry name" value="S24_LexA-like"/>
    <property type="match status" value="1"/>
</dbReference>
<dbReference type="FunFam" id="1.10.10.10:FF:000009">
    <property type="entry name" value="LexA repressor"/>
    <property type="match status" value="1"/>
</dbReference>
<dbReference type="FunFam" id="2.10.109.10:FF:000001">
    <property type="entry name" value="LexA repressor"/>
    <property type="match status" value="1"/>
</dbReference>
<dbReference type="Gene3D" id="2.10.109.10">
    <property type="entry name" value="Umud Fragment, subunit A"/>
    <property type="match status" value="1"/>
</dbReference>
<dbReference type="Gene3D" id="1.10.10.10">
    <property type="entry name" value="Winged helix-like DNA-binding domain superfamily/Winged helix DNA-binding domain"/>
    <property type="match status" value="1"/>
</dbReference>
<dbReference type="HAMAP" id="MF_00015">
    <property type="entry name" value="LexA"/>
    <property type="match status" value="1"/>
</dbReference>
<dbReference type="InterPro" id="IPR006200">
    <property type="entry name" value="LexA"/>
</dbReference>
<dbReference type="InterPro" id="IPR039418">
    <property type="entry name" value="LexA-like"/>
</dbReference>
<dbReference type="InterPro" id="IPR036286">
    <property type="entry name" value="LexA/Signal_pep-like_sf"/>
</dbReference>
<dbReference type="InterPro" id="IPR006199">
    <property type="entry name" value="LexA_DNA-bd_dom"/>
</dbReference>
<dbReference type="InterPro" id="IPR050077">
    <property type="entry name" value="LexA_repressor"/>
</dbReference>
<dbReference type="InterPro" id="IPR006197">
    <property type="entry name" value="Peptidase_S24_LexA"/>
</dbReference>
<dbReference type="InterPro" id="IPR015927">
    <property type="entry name" value="Peptidase_S24_S26A/B/C"/>
</dbReference>
<dbReference type="InterPro" id="IPR036388">
    <property type="entry name" value="WH-like_DNA-bd_sf"/>
</dbReference>
<dbReference type="InterPro" id="IPR036390">
    <property type="entry name" value="WH_DNA-bd_sf"/>
</dbReference>
<dbReference type="NCBIfam" id="TIGR00498">
    <property type="entry name" value="lexA"/>
    <property type="match status" value="1"/>
</dbReference>
<dbReference type="PANTHER" id="PTHR33516">
    <property type="entry name" value="LEXA REPRESSOR"/>
    <property type="match status" value="1"/>
</dbReference>
<dbReference type="PANTHER" id="PTHR33516:SF2">
    <property type="entry name" value="LEXA REPRESSOR-RELATED"/>
    <property type="match status" value="1"/>
</dbReference>
<dbReference type="Pfam" id="PF01726">
    <property type="entry name" value="LexA_DNA_bind"/>
    <property type="match status" value="1"/>
</dbReference>
<dbReference type="Pfam" id="PF00717">
    <property type="entry name" value="Peptidase_S24"/>
    <property type="match status" value="1"/>
</dbReference>
<dbReference type="PRINTS" id="PR00726">
    <property type="entry name" value="LEXASERPTASE"/>
</dbReference>
<dbReference type="SUPFAM" id="SSF51306">
    <property type="entry name" value="LexA/Signal peptidase"/>
    <property type="match status" value="1"/>
</dbReference>
<dbReference type="SUPFAM" id="SSF46785">
    <property type="entry name" value="Winged helix' DNA-binding domain"/>
    <property type="match status" value="1"/>
</dbReference>
<protein>
    <recommendedName>
        <fullName evidence="1">LexA repressor</fullName>
        <ecNumber evidence="1">3.4.21.88</ecNumber>
    </recommendedName>
</protein>
<accession>A1U269</accession>
<comment type="function">
    <text evidence="1">Represses a number of genes involved in the response to DNA damage (SOS response), including recA and lexA. In the presence of single-stranded DNA, RecA interacts with LexA causing an autocatalytic cleavage which disrupts the DNA-binding part of LexA, leading to derepression of the SOS regulon and eventually DNA repair.</text>
</comment>
<comment type="catalytic activity">
    <reaction evidence="1">
        <text>Hydrolysis of Ala-|-Gly bond in repressor LexA.</text>
        <dbReference type="EC" id="3.4.21.88"/>
    </reaction>
</comment>
<comment type="subunit">
    <text evidence="1">Homodimer.</text>
</comment>
<comment type="similarity">
    <text evidence="1">Belongs to the peptidase S24 family.</text>
</comment>
<gene>
    <name evidence="1" type="primary">lexA</name>
    <name type="ordered locus">Maqu_2007</name>
</gene>
<feature type="chain" id="PRO_0000322742" description="LexA repressor">
    <location>
        <begin position="1"/>
        <end position="202"/>
    </location>
</feature>
<feature type="DNA-binding region" description="H-T-H motif" evidence="1">
    <location>
        <begin position="27"/>
        <end position="47"/>
    </location>
</feature>
<feature type="active site" description="For autocatalytic cleavage activity" evidence="1">
    <location>
        <position position="119"/>
    </location>
</feature>
<feature type="active site" description="For autocatalytic cleavage activity" evidence="1">
    <location>
        <position position="156"/>
    </location>
</feature>
<feature type="site" description="Cleavage; by autolysis" evidence="1">
    <location>
        <begin position="84"/>
        <end position="85"/>
    </location>
</feature>